<evidence type="ECO:0000255" key="1">
    <source>
        <dbReference type="HAMAP-Rule" id="MF_00049"/>
    </source>
</evidence>
<gene>
    <name evidence="1" type="primary">leuS</name>
    <name type="ordered locus">Oant_1095</name>
</gene>
<comment type="catalytic activity">
    <reaction evidence="1">
        <text>tRNA(Leu) + L-leucine + ATP = L-leucyl-tRNA(Leu) + AMP + diphosphate</text>
        <dbReference type="Rhea" id="RHEA:11688"/>
        <dbReference type="Rhea" id="RHEA-COMP:9613"/>
        <dbReference type="Rhea" id="RHEA-COMP:9622"/>
        <dbReference type="ChEBI" id="CHEBI:30616"/>
        <dbReference type="ChEBI" id="CHEBI:33019"/>
        <dbReference type="ChEBI" id="CHEBI:57427"/>
        <dbReference type="ChEBI" id="CHEBI:78442"/>
        <dbReference type="ChEBI" id="CHEBI:78494"/>
        <dbReference type="ChEBI" id="CHEBI:456215"/>
        <dbReference type="EC" id="6.1.1.4"/>
    </reaction>
</comment>
<comment type="subcellular location">
    <subcellularLocation>
        <location evidence="1">Cytoplasm</location>
    </subcellularLocation>
</comment>
<comment type="similarity">
    <text evidence="1">Belongs to the class-I aminoacyl-tRNA synthetase family.</text>
</comment>
<sequence>MAAERYNPRVAEAHWQKVWEEDRTFETDNSDSREKYYVLEMFPYPSGRIHMGHVRNYAMGDVVARYKRAKGFNVLHPMGWDAFGMPAENAAMQNKVHPKEWTYQNIATMRSQLKSMGLSLDWAREFATCDVEYYHRQQMLFIDLFEKGLVTRKTSKVNWDPVDNTVLANEQVVDGRGWRSGALVEQRELTQWFFKITDFSEELLAGLDTLDQWPEKVRLMQRNWIGKSEGLQVRFTLDGKTAPEGFSEVEVYTTRPDTLFGAAFVGISADHPLAKKLAENNASLTGFIEECHQHGTSLAALETAEKKGFDTGVKVKHPFDENWELPVYVANFVLMEYGTGAVFGCPAHDQRDLDFANKYKLKVTPVVMPKGEDAAGFSIGETAYTDDGVMINSRFLDGMTPEAAFNEVANRLEQTSLGNSPQASRKVQFRLRDWGISRQRYWGCPIPMIHCESCGVNPVPRADLPVKLPDDVEFDRPGNPLDRHATWRHVKCPKCGADARRETDTMDTFVDSSWYYARFTAPWENEPTDRKVADHWLPVDQYIGGIEHAILHLLYSRFFTRAMKVAGHVGIDEPFKGLFTQGMVVHETYKANGQWVAPADIRIEETDGKRSAALLSTGEPVEIGSIEKMSKSKKNVVDPDDIIASYGADTARWFMLSDSPPERDVIWTEAGAEGAHRFVQRVWRLVAEAAEHLKDVAPKTGTQGEALVVSKAAHKAVKAVGDDIEKLAFNRGVARLYELVNTAAASLQQVASGNADDELKSAVRDVTEKLILMLAPMMPHLAEQCLAVLGGKIAGRETLVARSAWPEFDPALVVENEIVMPVQINGKKRGDLTIARDADQASIQQAVLELDFVKAALNGSSPKKVIVVPQRIVNVVA</sequence>
<protein>
    <recommendedName>
        <fullName evidence="1">Leucine--tRNA ligase</fullName>
        <ecNumber evidence="1">6.1.1.4</ecNumber>
    </recommendedName>
    <alternativeName>
        <fullName evidence="1">Leucyl-tRNA synthetase</fullName>
        <shortName evidence="1">LeuRS</shortName>
    </alternativeName>
</protein>
<accession>A6WXW1</accession>
<name>SYL_BRUA4</name>
<feature type="chain" id="PRO_1000009384" description="Leucine--tRNA ligase">
    <location>
        <begin position="1"/>
        <end position="877"/>
    </location>
</feature>
<feature type="short sequence motif" description="'HIGH' region">
    <location>
        <begin position="43"/>
        <end position="53"/>
    </location>
</feature>
<feature type="short sequence motif" description="'KMSKS' region">
    <location>
        <begin position="628"/>
        <end position="632"/>
    </location>
</feature>
<feature type="binding site" evidence="1">
    <location>
        <position position="631"/>
    </location>
    <ligand>
        <name>ATP</name>
        <dbReference type="ChEBI" id="CHEBI:30616"/>
    </ligand>
</feature>
<dbReference type="EC" id="6.1.1.4" evidence="1"/>
<dbReference type="EMBL" id="CP000758">
    <property type="protein sequence ID" value="ABS13815.1"/>
    <property type="molecule type" value="Genomic_DNA"/>
</dbReference>
<dbReference type="RefSeq" id="WP_012091253.1">
    <property type="nucleotide sequence ID" value="NC_009667.1"/>
</dbReference>
<dbReference type="SMR" id="A6WXW1"/>
<dbReference type="STRING" id="439375.Oant_1095"/>
<dbReference type="KEGG" id="oan:Oant_1095"/>
<dbReference type="PATRIC" id="fig|439375.7.peg.1145"/>
<dbReference type="eggNOG" id="COG0495">
    <property type="taxonomic scope" value="Bacteria"/>
</dbReference>
<dbReference type="HOGENOM" id="CLU_004427_0_0_5"/>
<dbReference type="PhylomeDB" id="A6WXW1"/>
<dbReference type="Proteomes" id="UP000002301">
    <property type="component" value="Chromosome 1"/>
</dbReference>
<dbReference type="GO" id="GO:0005829">
    <property type="term" value="C:cytosol"/>
    <property type="evidence" value="ECO:0007669"/>
    <property type="project" value="TreeGrafter"/>
</dbReference>
<dbReference type="GO" id="GO:0002161">
    <property type="term" value="F:aminoacyl-tRNA deacylase activity"/>
    <property type="evidence" value="ECO:0007669"/>
    <property type="project" value="InterPro"/>
</dbReference>
<dbReference type="GO" id="GO:0005524">
    <property type="term" value="F:ATP binding"/>
    <property type="evidence" value="ECO:0007669"/>
    <property type="project" value="UniProtKB-UniRule"/>
</dbReference>
<dbReference type="GO" id="GO:0004823">
    <property type="term" value="F:leucine-tRNA ligase activity"/>
    <property type="evidence" value="ECO:0007669"/>
    <property type="project" value="UniProtKB-UniRule"/>
</dbReference>
<dbReference type="GO" id="GO:0006429">
    <property type="term" value="P:leucyl-tRNA aminoacylation"/>
    <property type="evidence" value="ECO:0007669"/>
    <property type="project" value="UniProtKB-UniRule"/>
</dbReference>
<dbReference type="CDD" id="cd07958">
    <property type="entry name" value="Anticodon_Ia_Leu_BEm"/>
    <property type="match status" value="1"/>
</dbReference>
<dbReference type="CDD" id="cd00812">
    <property type="entry name" value="LeuRS_core"/>
    <property type="match status" value="1"/>
</dbReference>
<dbReference type="FunFam" id="1.10.730.10:FF:000002">
    <property type="entry name" value="Leucine--tRNA ligase"/>
    <property type="match status" value="1"/>
</dbReference>
<dbReference type="FunFam" id="3.40.50.620:FF:000003">
    <property type="entry name" value="Leucine--tRNA ligase"/>
    <property type="match status" value="1"/>
</dbReference>
<dbReference type="Gene3D" id="2.20.28.290">
    <property type="match status" value="1"/>
</dbReference>
<dbReference type="Gene3D" id="3.10.20.590">
    <property type="match status" value="1"/>
</dbReference>
<dbReference type="Gene3D" id="3.40.50.620">
    <property type="entry name" value="HUPs"/>
    <property type="match status" value="2"/>
</dbReference>
<dbReference type="Gene3D" id="1.10.730.10">
    <property type="entry name" value="Isoleucyl-tRNA Synthetase, Domain 1"/>
    <property type="match status" value="1"/>
</dbReference>
<dbReference type="Gene3D" id="3.90.740.10">
    <property type="entry name" value="Valyl/Leucyl/Isoleucyl-tRNA synthetase, editing domain"/>
    <property type="match status" value="1"/>
</dbReference>
<dbReference type="HAMAP" id="MF_00049_B">
    <property type="entry name" value="Leu_tRNA_synth_B"/>
    <property type="match status" value="1"/>
</dbReference>
<dbReference type="InterPro" id="IPR001412">
    <property type="entry name" value="aa-tRNA-synth_I_CS"/>
</dbReference>
<dbReference type="InterPro" id="IPR002300">
    <property type="entry name" value="aa-tRNA-synth_Ia"/>
</dbReference>
<dbReference type="InterPro" id="IPR002302">
    <property type="entry name" value="Leu-tRNA-ligase"/>
</dbReference>
<dbReference type="InterPro" id="IPR025709">
    <property type="entry name" value="Leu_tRNA-synth_edit"/>
</dbReference>
<dbReference type="InterPro" id="IPR013155">
    <property type="entry name" value="M/V/L/I-tRNA-synth_anticd-bd"/>
</dbReference>
<dbReference type="InterPro" id="IPR015413">
    <property type="entry name" value="Methionyl/Leucyl_tRNA_Synth"/>
</dbReference>
<dbReference type="InterPro" id="IPR014729">
    <property type="entry name" value="Rossmann-like_a/b/a_fold"/>
</dbReference>
<dbReference type="InterPro" id="IPR009080">
    <property type="entry name" value="tRNAsynth_Ia_anticodon-bd"/>
</dbReference>
<dbReference type="InterPro" id="IPR009008">
    <property type="entry name" value="Val/Leu/Ile-tRNA-synth_edit"/>
</dbReference>
<dbReference type="NCBIfam" id="TIGR00396">
    <property type="entry name" value="leuS_bact"/>
    <property type="match status" value="1"/>
</dbReference>
<dbReference type="PANTHER" id="PTHR43740:SF2">
    <property type="entry name" value="LEUCINE--TRNA LIGASE, MITOCHONDRIAL"/>
    <property type="match status" value="1"/>
</dbReference>
<dbReference type="PANTHER" id="PTHR43740">
    <property type="entry name" value="LEUCYL-TRNA SYNTHETASE"/>
    <property type="match status" value="1"/>
</dbReference>
<dbReference type="Pfam" id="PF08264">
    <property type="entry name" value="Anticodon_1"/>
    <property type="match status" value="1"/>
</dbReference>
<dbReference type="Pfam" id="PF00133">
    <property type="entry name" value="tRNA-synt_1"/>
    <property type="match status" value="2"/>
</dbReference>
<dbReference type="Pfam" id="PF13603">
    <property type="entry name" value="tRNA-synt_1_2"/>
    <property type="match status" value="1"/>
</dbReference>
<dbReference type="Pfam" id="PF09334">
    <property type="entry name" value="tRNA-synt_1g"/>
    <property type="match status" value="1"/>
</dbReference>
<dbReference type="PRINTS" id="PR00985">
    <property type="entry name" value="TRNASYNTHLEU"/>
</dbReference>
<dbReference type="SUPFAM" id="SSF47323">
    <property type="entry name" value="Anticodon-binding domain of a subclass of class I aminoacyl-tRNA synthetases"/>
    <property type="match status" value="1"/>
</dbReference>
<dbReference type="SUPFAM" id="SSF52374">
    <property type="entry name" value="Nucleotidylyl transferase"/>
    <property type="match status" value="1"/>
</dbReference>
<dbReference type="SUPFAM" id="SSF50677">
    <property type="entry name" value="ValRS/IleRS/LeuRS editing domain"/>
    <property type="match status" value="1"/>
</dbReference>
<dbReference type="PROSITE" id="PS00178">
    <property type="entry name" value="AA_TRNA_LIGASE_I"/>
    <property type="match status" value="1"/>
</dbReference>
<keyword id="KW-0030">Aminoacyl-tRNA synthetase</keyword>
<keyword id="KW-0067">ATP-binding</keyword>
<keyword id="KW-0963">Cytoplasm</keyword>
<keyword id="KW-0436">Ligase</keyword>
<keyword id="KW-0547">Nucleotide-binding</keyword>
<keyword id="KW-0648">Protein biosynthesis</keyword>
<keyword id="KW-1185">Reference proteome</keyword>
<reference key="1">
    <citation type="journal article" date="2011" name="J. Bacteriol.">
        <title>Genome of Ochrobactrum anthropi ATCC 49188 T, a versatile opportunistic pathogen and symbiont of several eukaryotic hosts.</title>
        <authorList>
            <person name="Chain P.S."/>
            <person name="Lang D.M."/>
            <person name="Comerci D.J."/>
            <person name="Malfatti S.A."/>
            <person name="Vergez L.M."/>
            <person name="Shin M."/>
            <person name="Ugalde R.A."/>
            <person name="Garcia E."/>
            <person name="Tolmasky M.E."/>
        </authorList>
    </citation>
    <scope>NUCLEOTIDE SEQUENCE [LARGE SCALE GENOMIC DNA]</scope>
    <source>
        <strain>ATCC 49188 / DSM 6882 / CCUG 24695 / JCM 21032 / LMG 3331 / NBRC 15819 / NCTC 12168 / Alc 37</strain>
    </source>
</reference>
<organism>
    <name type="scientific">Brucella anthropi (strain ATCC 49188 / DSM 6882 / CCUG 24695 / JCM 21032 / LMG 3331 / NBRC 15819 / NCTC 12168 / Alc 37)</name>
    <name type="common">Ochrobactrum anthropi</name>
    <dbReference type="NCBI Taxonomy" id="439375"/>
    <lineage>
        <taxon>Bacteria</taxon>
        <taxon>Pseudomonadati</taxon>
        <taxon>Pseudomonadota</taxon>
        <taxon>Alphaproteobacteria</taxon>
        <taxon>Hyphomicrobiales</taxon>
        <taxon>Brucellaceae</taxon>
        <taxon>Brucella/Ochrobactrum group</taxon>
        <taxon>Brucella</taxon>
    </lineage>
</organism>
<proteinExistence type="inferred from homology"/>